<protein>
    <recommendedName>
        <fullName evidence="1">Molybdenum import ATP-binding protein ModC</fullName>
        <ecNumber evidence="1">7.3.2.5</ecNumber>
    </recommendedName>
</protein>
<sequence>MLELNFSQQLGDLHLQVATDLPAQGITAIFGLSGAGKTSLINVIGGLTRPQQGRVILNGRVLVDAEKNIYLPPEKRRVGYVFQDARLFPHYRVRGNLQYGMAASMRGQFDAIVGLLGIEPLLNRFPFTLSGGEKQRVAIGRALLTAPELLLMDEPLASLDLPRKRELLPYLERLAQDVNTPILYVSHSMDEILRLADQVVVMDAGKVRAVGGLEEVWASSALRPWLQREEPSSILRVSVIGHHDRYAMTALALGDQRLWVGKLDAAEGNSMRIRINAADVSLALQPPHSSSIRNILPVKVAECLDVDGQVDVKLAIGEQWLWARITPWARDELGLKPGQWVYAQIKSVSFNRQNGPVPD</sequence>
<dbReference type="EC" id="7.3.2.5" evidence="1"/>
<dbReference type="EMBL" id="CP000305">
    <property type="protein sequence ID" value="ABG19181.1"/>
    <property type="molecule type" value="Genomic_DNA"/>
</dbReference>
<dbReference type="EMBL" id="ACNQ01000017">
    <property type="protein sequence ID" value="EEO75325.1"/>
    <property type="molecule type" value="Genomic_DNA"/>
</dbReference>
<dbReference type="RefSeq" id="WP_002210758.1">
    <property type="nucleotide sequence ID" value="NZ_ACNQ01000017.1"/>
</dbReference>
<dbReference type="SMR" id="Q1CFP9"/>
<dbReference type="GeneID" id="57977286"/>
<dbReference type="KEGG" id="ypn:YPN_2854"/>
<dbReference type="HOGENOM" id="CLU_000604_1_1_6"/>
<dbReference type="Proteomes" id="UP000008936">
    <property type="component" value="Chromosome"/>
</dbReference>
<dbReference type="GO" id="GO:0005886">
    <property type="term" value="C:plasma membrane"/>
    <property type="evidence" value="ECO:0007669"/>
    <property type="project" value="UniProtKB-SubCell"/>
</dbReference>
<dbReference type="GO" id="GO:0015412">
    <property type="term" value="F:ABC-type molybdate transporter activity"/>
    <property type="evidence" value="ECO:0007669"/>
    <property type="project" value="UniProtKB-EC"/>
</dbReference>
<dbReference type="GO" id="GO:0005524">
    <property type="term" value="F:ATP binding"/>
    <property type="evidence" value="ECO:0007669"/>
    <property type="project" value="UniProtKB-KW"/>
</dbReference>
<dbReference type="GO" id="GO:0016887">
    <property type="term" value="F:ATP hydrolysis activity"/>
    <property type="evidence" value="ECO:0007669"/>
    <property type="project" value="InterPro"/>
</dbReference>
<dbReference type="FunFam" id="3.40.50.300:FF:000634">
    <property type="entry name" value="Molybdenum import ATP-binding protein ModC"/>
    <property type="match status" value="1"/>
</dbReference>
<dbReference type="Gene3D" id="2.40.50.100">
    <property type="match status" value="1"/>
</dbReference>
<dbReference type="Gene3D" id="3.40.50.300">
    <property type="entry name" value="P-loop containing nucleotide triphosphate hydrolases"/>
    <property type="match status" value="1"/>
</dbReference>
<dbReference type="InterPro" id="IPR003593">
    <property type="entry name" value="AAA+_ATPase"/>
</dbReference>
<dbReference type="InterPro" id="IPR003439">
    <property type="entry name" value="ABC_transporter-like_ATP-bd"/>
</dbReference>
<dbReference type="InterPro" id="IPR017871">
    <property type="entry name" value="ABC_transporter-like_CS"/>
</dbReference>
<dbReference type="InterPro" id="IPR008995">
    <property type="entry name" value="Mo/tungstate-bd_C_term_dom"/>
</dbReference>
<dbReference type="InterPro" id="IPR011868">
    <property type="entry name" value="ModC_ABC_ATP-bd"/>
</dbReference>
<dbReference type="InterPro" id="IPR050334">
    <property type="entry name" value="Molybdenum_import_ModC"/>
</dbReference>
<dbReference type="InterPro" id="IPR004606">
    <property type="entry name" value="Mop_domain"/>
</dbReference>
<dbReference type="InterPro" id="IPR027417">
    <property type="entry name" value="P-loop_NTPase"/>
</dbReference>
<dbReference type="InterPro" id="IPR005116">
    <property type="entry name" value="Transp-assoc_OB_typ1"/>
</dbReference>
<dbReference type="NCBIfam" id="TIGR02142">
    <property type="entry name" value="modC_ABC"/>
    <property type="match status" value="1"/>
</dbReference>
<dbReference type="NCBIfam" id="TIGR00638">
    <property type="entry name" value="Mop"/>
    <property type="match status" value="1"/>
</dbReference>
<dbReference type="NCBIfam" id="NF008355">
    <property type="entry name" value="PRK11144.1"/>
    <property type="match status" value="1"/>
</dbReference>
<dbReference type="PANTHER" id="PTHR43514">
    <property type="entry name" value="ABC TRANSPORTER I FAMILY MEMBER 10"/>
    <property type="match status" value="1"/>
</dbReference>
<dbReference type="PANTHER" id="PTHR43514:SF4">
    <property type="entry name" value="ABC TRANSPORTER I FAMILY MEMBER 10"/>
    <property type="match status" value="1"/>
</dbReference>
<dbReference type="Pfam" id="PF00005">
    <property type="entry name" value="ABC_tran"/>
    <property type="match status" value="1"/>
</dbReference>
<dbReference type="Pfam" id="PF03459">
    <property type="entry name" value="TOBE"/>
    <property type="match status" value="1"/>
</dbReference>
<dbReference type="SMART" id="SM00382">
    <property type="entry name" value="AAA"/>
    <property type="match status" value="1"/>
</dbReference>
<dbReference type="SUPFAM" id="SSF50331">
    <property type="entry name" value="MOP-like"/>
    <property type="match status" value="1"/>
</dbReference>
<dbReference type="SUPFAM" id="SSF52540">
    <property type="entry name" value="P-loop containing nucleoside triphosphate hydrolases"/>
    <property type="match status" value="1"/>
</dbReference>
<dbReference type="PROSITE" id="PS00211">
    <property type="entry name" value="ABC_TRANSPORTER_1"/>
    <property type="match status" value="1"/>
</dbReference>
<dbReference type="PROSITE" id="PS50893">
    <property type="entry name" value="ABC_TRANSPORTER_2"/>
    <property type="match status" value="1"/>
</dbReference>
<dbReference type="PROSITE" id="PS51241">
    <property type="entry name" value="MODC"/>
    <property type="match status" value="1"/>
</dbReference>
<dbReference type="PROSITE" id="PS51866">
    <property type="entry name" value="MOP"/>
    <property type="match status" value="1"/>
</dbReference>
<reference key="1">
    <citation type="journal article" date="2006" name="J. Bacteriol.">
        <title>Complete genome sequence of Yersinia pestis strains Antiqua and Nepal516: evidence of gene reduction in an emerging pathogen.</title>
        <authorList>
            <person name="Chain P.S.G."/>
            <person name="Hu P."/>
            <person name="Malfatti S.A."/>
            <person name="Radnedge L."/>
            <person name="Larimer F."/>
            <person name="Vergez L.M."/>
            <person name="Worsham P."/>
            <person name="Chu M.C."/>
            <person name="Andersen G.L."/>
        </authorList>
    </citation>
    <scope>NUCLEOTIDE SEQUENCE [LARGE SCALE GENOMIC DNA]</scope>
    <source>
        <strain>Nepal516</strain>
    </source>
</reference>
<reference key="2">
    <citation type="submission" date="2009-04" db="EMBL/GenBank/DDBJ databases">
        <title>Yersinia pestis Nepal516A whole genome shotgun sequencing project.</title>
        <authorList>
            <person name="Plunkett G. III"/>
            <person name="Anderson B.D."/>
            <person name="Baumler D.J."/>
            <person name="Burland V."/>
            <person name="Cabot E.L."/>
            <person name="Glasner J.D."/>
            <person name="Mau B."/>
            <person name="Neeno-Eckwall E."/>
            <person name="Perna N.T."/>
            <person name="Munk A.C."/>
            <person name="Tapia R."/>
            <person name="Green L.D."/>
            <person name="Rogers Y.C."/>
            <person name="Detter J.C."/>
            <person name="Bruce D.C."/>
            <person name="Brettin T.S."/>
        </authorList>
    </citation>
    <scope>NUCLEOTIDE SEQUENCE [LARGE SCALE GENOMIC DNA]</scope>
    <source>
        <strain>Nepal516</strain>
    </source>
</reference>
<comment type="function">
    <text evidence="1">Part of the ABC transporter complex ModABC involved in molybdenum import. Responsible for energy coupling to the transport system.</text>
</comment>
<comment type="catalytic activity">
    <reaction evidence="1">
        <text>molybdate(out) + ATP + H2O = molybdate(in) + ADP + phosphate + H(+)</text>
        <dbReference type="Rhea" id="RHEA:22020"/>
        <dbReference type="ChEBI" id="CHEBI:15377"/>
        <dbReference type="ChEBI" id="CHEBI:15378"/>
        <dbReference type="ChEBI" id="CHEBI:30616"/>
        <dbReference type="ChEBI" id="CHEBI:36264"/>
        <dbReference type="ChEBI" id="CHEBI:43474"/>
        <dbReference type="ChEBI" id="CHEBI:456216"/>
        <dbReference type="EC" id="7.3.2.5"/>
    </reaction>
</comment>
<comment type="subunit">
    <text evidence="1">The complex is composed of two ATP-binding proteins (ModC), two transmembrane proteins (ModB) and a solute-binding protein (ModA).</text>
</comment>
<comment type="subcellular location">
    <subcellularLocation>
        <location evidence="1">Cell inner membrane</location>
        <topology evidence="1">Peripheral membrane protein</topology>
    </subcellularLocation>
</comment>
<comment type="similarity">
    <text evidence="1">Belongs to the ABC transporter superfamily. Molybdate importer (TC 3.A.1.8) family.</text>
</comment>
<feature type="chain" id="PRO_0000271699" description="Molybdenum import ATP-binding protein ModC">
    <location>
        <begin position="1"/>
        <end position="359"/>
    </location>
</feature>
<feature type="domain" description="ABC transporter" evidence="1">
    <location>
        <begin position="1"/>
        <end position="229"/>
    </location>
</feature>
<feature type="domain" description="Mop" evidence="2">
    <location>
        <begin position="289"/>
        <end position="354"/>
    </location>
</feature>
<feature type="binding site" evidence="1">
    <location>
        <begin position="31"/>
        <end position="38"/>
    </location>
    <ligand>
        <name>ATP</name>
        <dbReference type="ChEBI" id="CHEBI:30616"/>
    </ligand>
</feature>
<gene>
    <name evidence="1" type="primary">modC</name>
    <name type="ordered locus">YPN_2854</name>
    <name type="ORF">YP516_3227</name>
</gene>
<evidence type="ECO:0000255" key="1">
    <source>
        <dbReference type="HAMAP-Rule" id="MF_01705"/>
    </source>
</evidence>
<evidence type="ECO:0000255" key="2">
    <source>
        <dbReference type="PROSITE-ProRule" id="PRU01213"/>
    </source>
</evidence>
<keyword id="KW-0067">ATP-binding</keyword>
<keyword id="KW-0997">Cell inner membrane</keyword>
<keyword id="KW-1003">Cell membrane</keyword>
<keyword id="KW-0472">Membrane</keyword>
<keyword id="KW-0500">Molybdenum</keyword>
<keyword id="KW-0547">Nucleotide-binding</keyword>
<keyword id="KW-1278">Translocase</keyword>
<keyword id="KW-0813">Transport</keyword>
<name>MODC_YERPN</name>
<accession>Q1CFP9</accession>
<accession>C4GWM5</accession>
<organism>
    <name type="scientific">Yersinia pestis bv. Antiqua (strain Nepal516)</name>
    <dbReference type="NCBI Taxonomy" id="377628"/>
    <lineage>
        <taxon>Bacteria</taxon>
        <taxon>Pseudomonadati</taxon>
        <taxon>Pseudomonadota</taxon>
        <taxon>Gammaproteobacteria</taxon>
        <taxon>Enterobacterales</taxon>
        <taxon>Yersiniaceae</taxon>
        <taxon>Yersinia</taxon>
    </lineage>
</organism>
<proteinExistence type="inferred from homology"/>